<reference key="1">
    <citation type="submission" date="2007-10" db="EMBL/GenBank/DDBJ databases">
        <title>Complete sequence of Salinispora arenicola CNS-205.</title>
        <authorList>
            <consortium name="US DOE Joint Genome Institute"/>
            <person name="Copeland A."/>
            <person name="Lucas S."/>
            <person name="Lapidus A."/>
            <person name="Barry K."/>
            <person name="Glavina del Rio T."/>
            <person name="Dalin E."/>
            <person name="Tice H."/>
            <person name="Pitluck S."/>
            <person name="Foster B."/>
            <person name="Schmutz J."/>
            <person name="Larimer F."/>
            <person name="Land M."/>
            <person name="Hauser L."/>
            <person name="Kyrpides N."/>
            <person name="Ivanova N."/>
            <person name="Jensen P.R."/>
            <person name="Moore B.S."/>
            <person name="Penn K."/>
            <person name="Jenkins C."/>
            <person name="Udwary D."/>
            <person name="Xiang L."/>
            <person name="Gontang E."/>
            <person name="Richardson P."/>
        </authorList>
    </citation>
    <scope>NUCLEOTIDE SEQUENCE [LARGE SCALE GENOMIC DNA]</scope>
    <source>
        <strain>CNS-205</strain>
    </source>
</reference>
<comment type="function">
    <text evidence="1">Catalyzes the methylthiolation of N6-(dimethylallyl)adenosine (i(6)A), leading to the formation of 2-methylthio-N6-(dimethylallyl)adenosine (ms(2)i(6)A) at position 37 in tRNAs that read codons beginning with uridine.</text>
</comment>
<comment type="catalytic activity">
    <reaction evidence="1">
        <text>N(6)-dimethylallyladenosine(37) in tRNA + (sulfur carrier)-SH + AH2 + 2 S-adenosyl-L-methionine = 2-methylsulfanyl-N(6)-dimethylallyladenosine(37) in tRNA + (sulfur carrier)-H + 5'-deoxyadenosine + L-methionine + A + S-adenosyl-L-homocysteine + 2 H(+)</text>
        <dbReference type="Rhea" id="RHEA:37067"/>
        <dbReference type="Rhea" id="RHEA-COMP:10375"/>
        <dbReference type="Rhea" id="RHEA-COMP:10376"/>
        <dbReference type="Rhea" id="RHEA-COMP:14737"/>
        <dbReference type="Rhea" id="RHEA-COMP:14739"/>
        <dbReference type="ChEBI" id="CHEBI:13193"/>
        <dbReference type="ChEBI" id="CHEBI:15378"/>
        <dbReference type="ChEBI" id="CHEBI:17319"/>
        <dbReference type="ChEBI" id="CHEBI:17499"/>
        <dbReference type="ChEBI" id="CHEBI:29917"/>
        <dbReference type="ChEBI" id="CHEBI:57844"/>
        <dbReference type="ChEBI" id="CHEBI:57856"/>
        <dbReference type="ChEBI" id="CHEBI:59789"/>
        <dbReference type="ChEBI" id="CHEBI:64428"/>
        <dbReference type="ChEBI" id="CHEBI:74415"/>
        <dbReference type="ChEBI" id="CHEBI:74417"/>
        <dbReference type="EC" id="2.8.4.3"/>
    </reaction>
</comment>
<comment type="cofactor">
    <cofactor evidence="1">
        <name>[4Fe-4S] cluster</name>
        <dbReference type="ChEBI" id="CHEBI:49883"/>
    </cofactor>
    <text evidence="1">Binds 2 [4Fe-4S] clusters. One cluster is coordinated with 3 cysteines and an exchangeable S-adenosyl-L-methionine.</text>
</comment>
<comment type="subunit">
    <text evidence="1">Monomer.</text>
</comment>
<comment type="subcellular location">
    <subcellularLocation>
        <location evidence="1">Cytoplasm</location>
    </subcellularLocation>
</comment>
<comment type="similarity">
    <text evidence="1">Belongs to the methylthiotransferase family. MiaB subfamily.</text>
</comment>
<proteinExistence type="inferred from homology"/>
<accession>A8M7W6</accession>
<organism>
    <name type="scientific">Salinispora arenicola (strain CNS-205)</name>
    <dbReference type="NCBI Taxonomy" id="391037"/>
    <lineage>
        <taxon>Bacteria</taxon>
        <taxon>Bacillati</taxon>
        <taxon>Actinomycetota</taxon>
        <taxon>Actinomycetes</taxon>
        <taxon>Micromonosporales</taxon>
        <taxon>Micromonosporaceae</taxon>
        <taxon>Salinispora</taxon>
    </lineage>
</organism>
<evidence type="ECO:0000255" key="1">
    <source>
        <dbReference type="HAMAP-Rule" id="MF_01864"/>
    </source>
</evidence>
<evidence type="ECO:0000255" key="2">
    <source>
        <dbReference type="PROSITE-ProRule" id="PRU01266"/>
    </source>
</evidence>
<evidence type="ECO:0000256" key="3">
    <source>
        <dbReference type="SAM" id="MobiDB-lite"/>
    </source>
</evidence>
<feature type="chain" id="PRO_0000374517" description="tRNA-2-methylthio-N(6)-dimethylallyladenosine synthase">
    <location>
        <begin position="1"/>
        <end position="502"/>
    </location>
</feature>
<feature type="domain" description="MTTase N-terminal" evidence="1">
    <location>
        <begin position="12"/>
        <end position="129"/>
    </location>
</feature>
<feature type="domain" description="Radical SAM core" evidence="2">
    <location>
        <begin position="152"/>
        <end position="383"/>
    </location>
</feature>
<feature type="domain" description="TRAM" evidence="1">
    <location>
        <begin position="385"/>
        <end position="455"/>
    </location>
</feature>
<feature type="region of interest" description="Disordered" evidence="3">
    <location>
        <begin position="451"/>
        <end position="502"/>
    </location>
</feature>
<feature type="binding site" evidence="1">
    <location>
        <position position="21"/>
    </location>
    <ligand>
        <name>[4Fe-4S] cluster</name>
        <dbReference type="ChEBI" id="CHEBI:49883"/>
        <label>1</label>
    </ligand>
</feature>
<feature type="binding site" evidence="1">
    <location>
        <position position="58"/>
    </location>
    <ligand>
        <name>[4Fe-4S] cluster</name>
        <dbReference type="ChEBI" id="CHEBI:49883"/>
        <label>1</label>
    </ligand>
</feature>
<feature type="binding site" evidence="1">
    <location>
        <position position="92"/>
    </location>
    <ligand>
        <name>[4Fe-4S] cluster</name>
        <dbReference type="ChEBI" id="CHEBI:49883"/>
        <label>1</label>
    </ligand>
</feature>
<feature type="binding site" evidence="1">
    <location>
        <position position="166"/>
    </location>
    <ligand>
        <name>[4Fe-4S] cluster</name>
        <dbReference type="ChEBI" id="CHEBI:49883"/>
        <label>2</label>
        <note>4Fe-4S-S-AdoMet</note>
    </ligand>
</feature>
<feature type="binding site" evidence="1">
    <location>
        <position position="170"/>
    </location>
    <ligand>
        <name>[4Fe-4S] cluster</name>
        <dbReference type="ChEBI" id="CHEBI:49883"/>
        <label>2</label>
        <note>4Fe-4S-S-AdoMet</note>
    </ligand>
</feature>
<feature type="binding site" evidence="1">
    <location>
        <position position="173"/>
    </location>
    <ligand>
        <name>[4Fe-4S] cluster</name>
        <dbReference type="ChEBI" id="CHEBI:49883"/>
        <label>2</label>
        <note>4Fe-4S-S-AdoMet</note>
    </ligand>
</feature>
<dbReference type="EC" id="2.8.4.3" evidence="1"/>
<dbReference type="EMBL" id="CP000850">
    <property type="protein sequence ID" value="ABV97300.1"/>
    <property type="molecule type" value="Genomic_DNA"/>
</dbReference>
<dbReference type="SMR" id="A8M7W6"/>
<dbReference type="STRING" id="391037.Sare_1400"/>
<dbReference type="KEGG" id="saq:Sare_1400"/>
<dbReference type="eggNOG" id="COG0621">
    <property type="taxonomic scope" value="Bacteria"/>
</dbReference>
<dbReference type="HOGENOM" id="CLU_018697_2_2_11"/>
<dbReference type="GO" id="GO:0005829">
    <property type="term" value="C:cytosol"/>
    <property type="evidence" value="ECO:0007669"/>
    <property type="project" value="TreeGrafter"/>
</dbReference>
<dbReference type="GO" id="GO:0051539">
    <property type="term" value="F:4 iron, 4 sulfur cluster binding"/>
    <property type="evidence" value="ECO:0007669"/>
    <property type="project" value="UniProtKB-UniRule"/>
</dbReference>
<dbReference type="GO" id="GO:0046872">
    <property type="term" value="F:metal ion binding"/>
    <property type="evidence" value="ECO:0007669"/>
    <property type="project" value="UniProtKB-KW"/>
</dbReference>
<dbReference type="GO" id="GO:0035597">
    <property type="term" value="F:N6-isopentenyladenosine methylthiotransferase activity"/>
    <property type="evidence" value="ECO:0007669"/>
    <property type="project" value="TreeGrafter"/>
</dbReference>
<dbReference type="CDD" id="cd01335">
    <property type="entry name" value="Radical_SAM"/>
    <property type="match status" value="1"/>
</dbReference>
<dbReference type="FunFam" id="3.40.50.12160:FF:000003">
    <property type="entry name" value="CDK5 regulatory subunit-associated protein 1"/>
    <property type="match status" value="1"/>
</dbReference>
<dbReference type="FunFam" id="3.80.30.20:FF:000001">
    <property type="entry name" value="tRNA-2-methylthio-N(6)-dimethylallyladenosine synthase 2"/>
    <property type="match status" value="1"/>
</dbReference>
<dbReference type="Gene3D" id="3.40.50.12160">
    <property type="entry name" value="Methylthiotransferase, N-terminal domain"/>
    <property type="match status" value="1"/>
</dbReference>
<dbReference type="Gene3D" id="3.80.30.20">
    <property type="entry name" value="tm_1862 like domain"/>
    <property type="match status" value="1"/>
</dbReference>
<dbReference type="HAMAP" id="MF_01864">
    <property type="entry name" value="tRNA_metthiotr_MiaB"/>
    <property type="match status" value="1"/>
</dbReference>
<dbReference type="InterPro" id="IPR006638">
    <property type="entry name" value="Elp3/MiaA/NifB-like_rSAM"/>
</dbReference>
<dbReference type="InterPro" id="IPR005839">
    <property type="entry name" value="Methylthiotransferase"/>
</dbReference>
<dbReference type="InterPro" id="IPR020612">
    <property type="entry name" value="Methylthiotransferase_CS"/>
</dbReference>
<dbReference type="InterPro" id="IPR013848">
    <property type="entry name" value="Methylthiotransferase_N"/>
</dbReference>
<dbReference type="InterPro" id="IPR038135">
    <property type="entry name" value="Methylthiotransferase_N_sf"/>
</dbReference>
<dbReference type="InterPro" id="IPR006463">
    <property type="entry name" value="MiaB_methiolase"/>
</dbReference>
<dbReference type="InterPro" id="IPR007197">
    <property type="entry name" value="rSAM"/>
</dbReference>
<dbReference type="InterPro" id="IPR023404">
    <property type="entry name" value="rSAM_horseshoe"/>
</dbReference>
<dbReference type="InterPro" id="IPR002792">
    <property type="entry name" value="TRAM_dom"/>
</dbReference>
<dbReference type="NCBIfam" id="TIGR01574">
    <property type="entry name" value="miaB-methiolase"/>
    <property type="match status" value="1"/>
</dbReference>
<dbReference type="NCBIfam" id="TIGR00089">
    <property type="entry name" value="MiaB/RimO family radical SAM methylthiotransferase"/>
    <property type="match status" value="1"/>
</dbReference>
<dbReference type="PANTHER" id="PTHR43020">
    <property type="entry name" value="CDK5 REGULATORY SUBUNIT-ASSOCIATED PROTEIN 1"/>
    <property type="match status" value="1"/>
</dbReference>
<dbReference type="PANTHER" id="PTHR43020:SF2">
    <property type="entry name" value="MITOCHONDRIAL TRNA METHYLTHIOTRANSFERASE CDK5RAP1"/>
    <property type="match status" value="1"/>
</dbReference>
<dbReference type="Pfam" id="PF04055">
    <property type="entry name" value="Radical_SAM"/>
    <property type="match status" value="1"/>
</dbReference>
<dbReference type="Pfam" id="PF00919">
    <property type="entry name" value="UPF0004"/>
    <property type="match status" value="1"/>
</dbReference>
<dbReference type="SFLD" id="SFLDF00273">
    <property type="entry name" value="(dimethylallyl)adenosine_tRNA"/>
    <property type="match status" value="1"/>
</dbReference>
<dbReference type="SFLD" id="SFLDG01082">
    <property type="entry name" value="B12-binding_domain_containing"/>
    <property type="match status" value="1"/>
</dbReference>
<dbReference type="SFLD" id="SFLDG01061">
    <property type="entry name" value="methylthiotransferase"/>
    <property type="match status" value="1"/>
</dbReference>
<dbReference type="SMART" id="SM00729">
    <property type="entry name" value="Elp3"/>
    <property type="match status" value="1"/>
</dbReference>
<dbReference type="SUPFAM" id="SSF102114">
    <property type="entry name" value="Radical SAM enzymes"/>
    <property type="match status" value="1"/>
</dbReference>
<dbReference type="PROSITE" id="PS51449">
    <property type="entry name" value="MTTASE_N"/>
    <property type="match status" value="1"/>
</dbReference>
<dbReference type="PROSITE" id="PS01278">
    <property type="entry name" value="MTTASE_RADICAL"/>
    <property type="match status" value="1"/>
</dbReference>
<dbReference type="PROSITE" id="PS51918">
    <property type="entry name" value="RADICAL_SAM"/>
    <property type="match status" value="1"/>
</dbReference>
<dbReference type="PROSITE" id="PS50926">
    <property type="entry name" value="TRAM"/>
    <property type="match status" value="1"/>
</dbReference>
<name>MIAB_SALAI</name>
<sequence length="502" mass="54526">MVMTTAAASSPRTYQVRTYGCQMNVHDSERIAGLLEQAGYLRAGDADDVPDVVVFNTCAVRENADNRLYGNLGQLRPSKDRHPGMQIAVGGCLAQKDRSEIVRRAPWVDVVFGTHNIGSLPVLLERARHNAAAEVEILESLDVFPSTLPTRRESTYAGWVSISVGCNNTCTFCIVPALRGKERDRRPGDVLSEVRALVDEGVLEVTLLGQNVNSYGIEFGDRYAFGKLLRACGDIDGLERVRFTSPHPKDFTDDVIAAMAETPNVCHSLHMPLQSGSDDVLRAMRRSYRSERYLGIIEKVRAAMPDAAITTDIIVGFPGETEADFERTLDVVRSARFSSAFTFQYSKRPGTPAATMADQLPKPVVQERYERLVACVEEITWAENRRLVGETVEVLVAVGEGRKDERTGRLSGRARDGRLVHFDAGSLAGQIRPGDVVHTTVTYAAPHHLNADGEPLAHRRTPAGDAAEAGRRPRTAGVSLGLPTVGAPPSPVPPAASSACAC</sequence>
<protein>
    <recommendedName>
        <fullName evidence="1">tRNA-2-methylthio-N(6)-dimethylallyladenosine synthase</fullName>
        <ecNumber evidence="1">2.8.4.3</ecNumber>
    </recommendedName>
    <alternativeName>
        <fullName evidence="1">(Dimethylallyl)adenosine tRNA methylthiotransferase MiaB</fullName>
    </alternativeName>
    <alternativeName>
        <fullName evidence="1">tRNA-i(6)A37 methylthiotransferase</fullName>
    </alternativeName>
</protein>
<keyword id="KW-0004">4Fe-4S</keyword>
<keyword id="KW-0963">Cytoplasm</keyword>
<keyword id="KW-0408">Iron</keyword>
<keyword id="KW-0411">Iron-sulfur</keyword>
<keyword id="KW-0479">Metal-binding</keyword>
<keyword id="KW-0949">S-adenosyl-L-methionine</keyword>
<keyword id="KW-0808">Transferase</keyword>
<keyword id="KW-0819">tRNA processing</keyword>
<gene>
    <name evidence="1" type="primary">miaB</name>
    <name type="ordered locus">Sare_1400</name>
</gene>